<dbReference type="EMBL" id="DQ398104">
    <property type="protein sequence ID" value="ABD33984.1"/>
    <property type="molecule type" value="Genomic_DNA"/>
</dbReference>
<dbReference type="RefSeq" id="YP_635936.1">
    <property type="nucleotide sequence ID" value="NC_008100.1"/>
</dbReference>
<dbReference type="SMR" id="Q2EEV8"/>
<dbReference type="GeneID" id="4100447"/>
<dbReference type="GO" id="GO:0005762">
    <property type="term" value="C:mitochondrial large ribosomal subunit"/>
    <property type="evidence" value="ECO:0007669"/>
    <property type="project" value="TreeGrafter"/>
</dbReference>
<dbReference type="GO" id="GO:0009536">
    <property type="term" value="C:plastid"/>
    <property type="evidence" value="ECO:0007669"/>
    <property type="project" value="UniProtKB-SubCell"/>
</dbReference>
<dbReference type="GO" id="GO:0003723">
    <property type="term" value="F:RNA binding"/>
    <property type="evidence" value="ECO:0007669"/>
    <property type="project" value="InterPro"/>
</dbReference>
<dbReference type="GO" id="GO:0003735">
    <property type="term" value="F:structural constituent of ribosome"/>
    <property type="evidence" value="ECO:0007669"/>
    <property type="project" value="InterPro"/>
</dbReference>
<dbReference type="GO" id="GO:0016740">
    <property type="term" value="F:transferase activity"/>
    <property type="evidence" value="ECO:0007669"/>
    <property type="project" value="InterPro"/>
</dbReference>
<dbReference type="GO" id="GO:0032543">
    <property type="term" value="P:mitochondrial translation"/>
    <property type="evidence" value="ECO:0007669"/>
    <property type="project" value="TreeGrafter"/>
</dbReference>
<dbReference type="FunFam" id="2.30.30.30:FF:000001">
    <property type="entry name" value="50S ribosomal protein L2"/>
    <property type="match status" value="1"/>
</dbReference>
<dbReference type="FunFam" id="4.10.950.10:FF:000001">
    <property type="entry name" value="50S ribosomal protein L2"/>
    <property type="match status" value="1"/>
</dbReference>
<dbReference type="Gene3D" id="2.30.30.30">
    <property type="match status" value="1"/>
</dbReference>
<dbReference type="Gene3D" id="2.40.50.140">
    <property type="entry name" value="Nucleic acid-binding proteins"/>
    <property type="match status" value="1"/>
</dbReference>
<dbReference type="Gene3D" id="4.10.950.10">
    <property type="entry name" value="Ribosomal protein L2, domain 3"/>
    <property type="match status" value="1"/>
</dbReference>
<dbReference type="HAMAP" id="MF_01320_B">
    <property type="entry name" value="Ribosomal_uL2_B"/>
    <property type="match status" value="1"/>
</dbReference>
<dbReference type="InterPro" id="IPR012340">
    <property type="entry name" value="NA-bd_OB-fold"/>
</dbReference>
<dbReference type="InterPro" id="IPR014722">
    <property type="entry name" value="Rib_uL2_dom2"/>
</dbReference>
<dbReference type="InterPro" id="IPR002171">
    <property type="entry name" value="Ribosomal_uL2"/>
</dbReference>
<dbReference type="InterPro" id="IPR005880">
    <property type="entry name" value="Ribosomal_uL2_bac/org-type"/>
</dbReference>
<dbReference type="InterPro" id="IPR022669">
    <property type="entry name" value="Ribosomal_uL2_C"/>
</dbReference>
<dbReference type="InterPro" id="IPR022671">
    <property type="entry name" value="Ribosomal_uL2_CS"/>
</dbReference>
<dbReference type="InterPro" id="IPR014726">
    <property type="entry name" value="Ribosomal_uL2_dom3"/>
</dbReference>
<dbReference type="InterPro" id="IPR022666">
    <property type="entry name" value="Ribosomal_uL2_RNA-bd_dom"/>
</dbReference>
<dbReference type="InterPro" id="IPR008991">
    <property type="entry name" value="Translation_prot_SH3-like_sf"/>
</dbReference>
<dbReference type="NCBIfam" id="TIGR01171">
    <property type="entry name" value="rplB_bact"/>
    <property type="match status" value="1"/>
</dbReference>
<dbReference type="PANTHER" id="PTHR13691:SF5">
    <property type="entry name" value="LARGE RIBOSOMAL SUBUNIT PROTEIN UL2M"/>
    <property type="match status" value="1"/>
</dbReference>
<dbReference type="PANTHER" id="PTHR13691">
    <property type="entry name" value="RIBOSOMAL PROTEIN L2"/>
    <property type="match status" value="1"/>
</dbReference>
<dbReference type="Pfam" id="PF00181">
    <property type="entry name" value="Ribosomal_L2"/>
    <property type="match status" value="1"/>
</dbReference>
<dbReference type="Pfam" id="PF03947">
    <property type="entry name" value="Ribosomal_L2_C"/>
    <property type="match status" value="1"/>
</dbReference>
<dbReference type="PIRSF" id="PIRSF002158">
    <property type="entry name" value="Ribosomal_L2"/>
    <property type="match status" value="1"/>
</dbReference>
<dbReference type="SMART" id="SM01383">
    <property type="entry name" value="Ribosomal_L2"/>
    <property type="match status" value="1"/>
</dbReference>
<dbReference type="SMART" id="SM01382">
    <property type="entry name" value="Ribosomal_L2_C"/>
    <property type="match status" value="1"/>
</dbReference>
<dbReference type="SUPFAM" id="SSF50249">
    <property type="entry name" value="Nucleic acid-binding proteins"/>
    <property type="match status" value="1"/>
</dbReference>
<dbReference type="SUPFAM" id="SSF50104">
    <property type="entry name" value="Translation proteins SH3-like domain"/>
    <property type="match status" value="1"/>
</dbReference>
<dbReference type="PROSITE" id="PS00467">
    <property type="entry name" value="RIBOSOMAL_L2"/>
    <property type="match status" value="1"/>
</dbReference>
<evidence type="ECO:0000250" key="1"/>
<evidence type="ECO:0000255" key="2">
    <source>
        <dbReference type="HAMAP-Rule" id="MF_01320"/>
    </source>
</evidence>
<evidence type="ECO:0000256" key="3">
    <source>
        <dbReference type="SAM" id="MobiDB-lite"/>
    </source>
</evidence>
<evidence type="ECO:0000305" key="4"/>
<protein>
    <recommendedName>
        <fullName evidence="2">Large ribosomal subunit protein uL2c</fullName>
    </recommendedName>
    <alternativeName>
        <fullName evidence="4">50S ribosomal protein L2, plastid</fullName>
    </alternativeName>
</protein>
<reference key="1">
    <citation type="journal article" date="2006" name="BMC Biol.">
        <title>The complete plastid genome sequence of the parasitic green alga, Helicosporidium sp. is highly reduced and structured.</title>
        <authorList>
            <person name="de Koning A.P."/>
            <person name="Keeling P.J."/>
        </authorList>
    </citation>
    <scope>NUCLEOTIDE SEQUENCE [LARGE SCALE GENOMIC DNA]</scope>
</reference>
<organism>
    <name type="scientific">Helicosporidium sp. subsp. Simulium jonesii</name>
    <name type="common">Green alga</name>
    <dbReference type="NCBI Taxonomy" id="145475"/>
    <lineage>
        <taxon>Eukaryota</taxon>
        <taxon>Viridiplantae</taxon>
        <taxon>Chlorophyta</taxon>
        <taxon>core chlorophytes</taxon>
        <taxon>Trebouxiophyceae</taxon>
        <taxon>Chlorellales</taxon>
        <taxon>Chlorellaceae</taxon>
        <taxon>Helicosporidium</taxon>
    </lineage>
</organism>
<gene>
    <name type="primary">rpl2</name>
</gene>
<sequence length="282" mass="31174">MTLKKLNPITPGSRHRVIIDYSKQSKLLKPSTKNAPLKKNTLKIMTTEGRNFHGVITTRHRGGGHKRLYRIIEFNRNKLGVSGKVNNIEYDPNRTANIARIHYQDGSKKYIIHPEGLEKGANIIASAIAPLSIGNSLPLKSIPIGTEIHNIEFHPGKGGQLARSAGTGALVSYKTNSFVTLKLPSGRSRYFDNKCWATIGKVSKAEHKFINLGKAGRSRWLGIRPTVRGSAQNAVDHPHGGGEGKAPIGRIPSTPWGKPALGIKTRHRHKWSERFFKGLKKK</sequence>
<name>RK2_HELSJ</name>
<keyword id="KW-0934">Plastid</keyword>
<keyword id="KW-0687">Ribonucleoprotein</keyword>
<keyword id="KW-0689">Ribosomal protein</keyword>
<feature type="chain" id="PRO_0000237277" description="Large ribosomal subunit protein uL2c">
    <location>
        <begin position="1"/>
        <end position="282"/>
    </location>
</feature>
<feature type="region of interest" description="Disordered" evidence="3">
    <location>
        <begin position="230"/>
        <end position="261"/>
    </location>
</feature>
<comment type="subunit">
    <text evidence="1">Part of the 50S ribosomal subunit.</text>
</comment>
<comment type="subcellular location">
    <subcellularLocation>
        <location>Plastid</location>
    </subcellularLocation>
</comment>
<comment type="similarity">
    <text evidence="4">Belongs to the universal ribosomal protein uL2 family.</text>
</comment>
<proteinExistence type="inferred from homology"/>
<accession>Q2EEV8</accession>
<geneLocation type="non-photosynthetic plastid"/>